<gene>
    <name evidence="1" type="primary">argG</name>
    <name type="ordered locus">LBF_0087</name>
</gene>
<protein>
    <recommendedName>
        <fullName evidence="1">Argininosuccinate synthase</fullName>
        <ecNumber evidence="1">6.3.4.5</ecNumber>
    </recommendedName>
    <alternativeName>
        <fullName evidence="1">Citrulline--aspartate ligase</fullName>
    </alternativeName>
</protein>
<feature type="chain" id="PRO_1000089041" description="Argininosuccinate synthase">
    <location>
        <begin position="1"/>
        <end position="402"/>
    </location>
</feature>
<feature type="binding site" evidence="1">
    <location>
        <begin position="13"/>
        <end position="21"/>
    </location>
    <ligand>
        <name>ATP</name>
        <dbReference type="ChEBI" id="CHEBI:30616"/>
    </ligand>
</feature>
<feature type="binding site" evidence="1">
    <location>
        <position position="40"/>
    </location>
    <ligand>
        <name>ATP</name>
        <dbReference type="ChEBI" id="CHEBI:30616"/>
    </ligand>
</feature>
<feature type="binding site" evidence="1">
    <location>
        <position position="91"/>
    </location>
    <ligand>
        <name>L-citrulline</name>
        <dbReference type="ChEBI" id="CHEBI:57743"/>
    </ligand>
</feature>
<feature type="binding site" evidence="1">
    <location>
        <position position="96"/>
    </location>
    <ligand>
        <name>L-citrulline</name>
        <dbReference type="ChEBI" id="CHEBI:57743"/>
    </ligand>
</feature>
<feature type="binding site" evidence="1">
    <location>
        <position position="121"/>
    </location>
    <ligand>
        <name>ATP</name>
        <dbReference type="ChEBI" id="CHEBI:30616"/>
    </ligand>
</feature>
<feature type="binding site" evidence="1">
    <location>
        <position position="123"/>
    </location>
    <ligand>
        <name>L-aspartate</name>
        <dbReference type="ChEBI" id="CHEBI:29991"/>
    </ligand>
</feature>
<feature type="binding site" evidence="1">
    <location>
        <position position="127"/>
    </location>
    <ligand>
        <name>L-aspartate</name>
        <dbReference type="ChEBI" id="CHEBI:29991"/>
    </ligand>
</feature>
<feature type="binding site" evidence="1">
    <location>
        <position position="127"/>
    </location>
    <ligand>
        <name>L-citrulline</name>
        <dbReference type="ChEBI" id="CHEBI:57743"/>
    </ligand>
</feature>
<feature type="binding site" evidence="1">
    <location>
        <position position="128"/>
    </location>
    <ligand>
        <name>L-aspartate</name>
        <dbReference type="ChEBI" id="CHEBI:29991"/>
    </ligand>
</feature>
<feature type="binding site" evidence="1">
    <location>
        <position position="131"/>
    </location>
    <ligand>
        <name>L-citrulline</name>
        <dbReference type="ChEBI" id="CHEBI:57743"/>
    </ligand>
</feature>
<feature type="binding site" evidence="1">
    <location>
        <position position="180"/>
    </location>
    <ligand>
        <name>L-citrulline</name>
        <dbReference type="ChEBI" id="CHEBI:57743"/>
    </ligand>
</feature>
<feature type="binding site" evidence="1">
    <location>
        <position position="189"/>
    </location>
    <ligand>
        <name>L-citrulline</name>
        <dbReference type="ChEBI" id="CHEBI:57743"/>
    </ligand>
</feature>
<feature type="binding site" evidence="1">
    <location>
        <position position="265"/>
    </location>
    <ligand>
        <name>L-citrulline</name>
        <dbReference type="ChEBI" id="CHEBI:57743"/>
    </ligand>
</feature>
<feature type="binding site" evidence="1">
    <location>
        <position position="277"/>
    </location>
    <ligand>
        <name>L-citrulline</name>
        <dbReference type="ChEBI" id="CHEBI:57743"/>
    </ligand>
</feature>
<name>ASSY_LEPBA</name>
<accession>B0S9J6</accession>
<keyword id="KW-0028">Amino-acid biosynthesis</keyword>
<keyword id="KW-0055">Arginine biosynthesis</keyword>
<keyword id="KW-0067">ATP-binding</keyword>
<keyword id="KW-0963">Cytoplasm</keyword>
<keyword id="KW-0436">Ligase</keyword>
<keyword id="KW-0547">Nucleotide-binding</keyword>
<proteinExistence type="inferred from homology"/>
<comment type="catalytic activity">
    <reaction evidence="1">
        <text>L-citrulline + L-aspartate + ATP = 2-(N(omega)-L-arginino)succinate + AMP + diphosphate + H(+)</text>
        <dbReference type="Rhea" id="RHEA:10932"/>
        <dbReference type="ChEBI" id="CHEBI:15378"/>
        <dbReference type="ChEBI" id="CHEBI:29991"/>
        <dbReference type="ChEBI" id="CHEBI:30616"/>
        <dbReference type="ChEBI" id="CHEBI:33019"/>
        <dbReference type="ChEBI" id="CHEBI:57472"/>
        <dbReference type="ChEBI" id="CHEBI:57743"/>
        <dbReference type="ChEBI" id="CHEBI:456215"/>
        <dbReference type="EC" id="6.3.4.5"/>
    </reaction>
</comment>
<comment type="pathway">
    <text evidence="1">Amino-acid biosynthesis; L-arginine biosynthesis; L-arginine from L-ornithine and carbamoyl phosphate: step 2/3.</text>
</comment>
<comment type="subunit">
    <text evidence="1">Homotetramer.</text>
</comment>
<comment type="subcellular location">
    <subcellularLocation>
        <location evidence="1">Cytoplasm</location>
    </subcellularLocation>
</comment>
<comment type="similarity">
    <text evidence="1">Belongs to the argininosuccinate synthase family. Type 1 subfamily.</text>
</comment>
<evidence type="ECO:0000255" key="1">
    <source>
        <dbReference type="HAMAP-Rule" id="MF_00005"/>
    </source>
</evidence>
<organism>
    <name type="scientific">Leptospira biflexa serovar Patoc (strain Patoc 1 / Ames)</name>
    <dbReference type="NCBI Taxonomy" id="355278"/>
    <lineage>
        <taxon>Bacteria</taxon>
        <taxon>Pseudomonadati</taxon>
        <taxon>Spirochaetota</taxon>
        <taxon>Spirochaetia</taxon>
        <taxon>Leptospirales</taxon>
        <taxon>Leptospiraceae</taxon>
        <taxon>Leptospira</taxon>
    </lineage>
</organism>
<dbReference type="EC" id="6.3.4.5" evidence="1"/>
<dbReference type="EMBL" id="CP000777">
    <property type="protein sequence ID" value="ABZ92633.1"/>
    <property type="molecule type" value="Genomic_DNA"/>
</dbReference>
<dbReference type="RefSeq" id="WP_012387124.1">
    <property type="nucleotide sequence ID" value="NC_010842.1"/>
</dbReference>
<dbReference type="SMR" id="B0S9J6"/>
<dbReference type="KEGG" id="lbf:LBF_0087"/>
<dbReference type="HOGENOM" id="CLU_032784_4_2_12"/>
<dbReference type="UniPathway" id="UPA00068">
    <property type="reaction ID" value="UER00113"/>
</dbReference>
<dbReference type="GO" id="GO:0005737">
    <property type="term" value="C:cytoplasm"/>
    <property type="evidence" value="ECO:0007669"/>
    <property type="project" value="UniProtKB-SubCell"/>
</dbReference>
<dbReference type="GO" id="GO:0004055">
    <property type="term" value="F:argininosuccinate synthase activity"/>
    <property type="evidence" value="ECO:0007669"/>
    <property type="project" value="UniProtKB-UniRule"/>
</dbReference>
<dbReference type="GO" id="GO:0005524">
    <property type="term" value="F:ATP binding"/>
    <property type="evidence" value="ECO:0007669"/>
    <property type="project" value="UniProtKB-UniRule"/>
</dbReference>
<dbReference type="GO" id="GO:0000053">
    <property type="term" value="P:argininosuccinate metabolic process"/>
    <property type="evidence" value="ECO:0007669"/>
    <property type="project" value="TreeGrafter"/>
</dbReference>
<dbReference type="GO" id="GO:0006526">
    <property type="term" value="P:L-arginine biosynthetic process"/>
    <property type="evidence" value="ECO:0007669"/>
    <property type="project" value="UniProtKB-UniRule"/>
</dbReference>
<dbReference type="GO" id="GO:0000050">
    <property type="term" value="P:urea cycle"/>
    <property type="evidence" value="ECO:0007669"/>
    <property type="project" value="TreeGrafter"/>
</dbReference>
<dbReference type="CDD" id="cd01999">
    <property type="entry name" value="ASS"/>
    <property type="match status" value="1"/>
</dbReference>
<dbReference type="FunFam" id="3.40.50.620:FF:000019">
    <property type="entry name" value="Argininosuccinate synthase"/>
    <property type="match status" value="1"/>
</dbReference>
<dbReference type="FunFam" id="3.90.1260.10:FF:000007">
    <property type="entry name" value="Argininosuccinate synthase"/>
    <property type="match status" value="1"/>
</dbReference>
<dbReference type="Gene3D" id="3.90.1260.10">
    <property type="entry name" value="Argininosuccinate synthetase, chain A, domain 2"/>
    <property type="match status" value="1"/>
</dbReference>
<dbReference type="Gene3D" id="3.40.50.620">
    <property type="entry name" value="HUPs"/>
    <property type="match status" value="1"/>
</dbReference>
<dbReference type="Gene3D" id="1.20.5.470">
    <property type="entry name" value="Single helix bin"/>
    <property type="match status" value="1"/>
</dbReference>
<dbReference type="HAMAP" id="MF_00005">
    <property type="entry name" value="Arg_succ_synth_type1"/>
    <property type="match status" value="1"/>
</dbReference>
<dbReference type="InterPro" id="IPR048268">
    <property type="entry name" value="Arginosuc_syn_C"/>
</dbReference>
<dbReference type="InterPro" id="IPR048267">
    <property type="entry name" value="Arginosuc_syn_N"/>
</dbReference>
<dbReference type="InterPro" id="IPR001518">
    <property type="entry name" value="Arginosuc_synth"/>
</dbReference>
<dbReference type="InterPro" id="IPR018223">
    <property type="entry name" value="Arginosuc_synth_CS"/>
</dbReference>
<dbReference type="InterPro" id="IPR023434">
    <property type="entry name" value="Arginosuc_synth_type_1_subfam"/>
</dbReference>
<dbReference type="InterPro" id="IPR024074">
    <property type="entry name" value="AS_cat/multimer_dom_body"/>
</dbReference>
<dbReference type="InterPro" id="IPR014729">
    <property type="entry name" value="Rossmann-like_a/b/a_fold"/>
</dbReference>
<dbReference type="NCBIfam" id="TIGR00032">
    <property type="entry name" value="argG"/>
    <property type="match status" value="1"/>
</dbReference>
<dbReference type="NCBIfam" id="NF001770">
    <property type="entry name" value="PRK00509.1"/>
    <property type="match status" value="1"/>
</dbReference>
<dbReference type="PANTHER" id="PTHR11587">
    <property type="entry name" value="ARGININOSUCCINATE SYNTHASE"/>
    <property type="match status" value="1"/>
</dbReference>
<dbReference type="PANTHER" id="PTHR11587:SF2">
    <property type="entry name" value="ARGININOSUCCINATE SYNTHASE"/>
    <property type="match status" value="1"/>
</dbReference>
<dbReference type="Pfam" id="PF20979">
    <property type="entry name" value="Arginosuc_syn_C"/>
    <property type="match status" value="1"/>
</dbReference>
<dbReference type="Pfam" id="PF00764">
    <property type="entry name" value="Arginosuc_synth"/>
    <property type="match status" value="1"/>
</dbReference>
<dbReference type="SUPFAM" id="SSF52402">
    <property type="entry name" value="Adenine nucleotide alpha hydrolases-like"/>
    <property type="match status" value="1"/>
</dbReference>
<dbReference type="SUPFAM" id="SSF69864">
    <property type="entry name" value="Argininosuccinate synthetase, C-terminal domain"/>
    <property type="match status" value="1"/>
</dbReference>
<dbReference type="PROSITE" id="PS00564">
    <property type="entry name" value="ARGININOSUCCIN_SYN_1"/>
    <property type="match status" value="1"/>
</dbReference>
<dbReference type="PROSITE" id="PS00565">
    <property type="entry name" value="ARGININOSUCCIN_SYN_2"/>
    <property type="match status" value="1"/>
</dbReference>
<sequence length="402" mass="45184">MKEKPAPKKIVLAYSGGLDTSVILAWLKDTYGCEVIAFCADVGQKEELTGLEEKGKNTGASKVYIQDLRLEFARDFIYPAIRGNAIYEMRYLLGTSLARPLIAKAMADVAKKEGADAFSHGATGKGNDQVRFELTFKALSPNLQIIAPWRTWDFGGRADLIEYAKKKGIPVPVTAAKPYSMDRNLMHLSFEGGILEDPYNEPKEDMFILTVSPEKAPDKPTYLELDFENGDCVAIDGKKMNPLEVMETLNDLGGKNGVGRVDIVENRLVGIKSRGVYETPGGTILHIAHRDLESITLDRDTQHKKDELSQEFARYIYNGQWYSNQMNALRAYMDYTQKYVNGTVRIKLYKGNCTVVGRKSNKSLYNAGLSTFEKEELYNQYDAEGFINLYGLPMKEWARVNQ</sequence>
<reference key="1">
    <citation type="journal article" date="2008" name="PLoS ONE">
        <title>Genome sequence of the saprophyte Leptospira biflexa provides insights into the evolution of Leptospira and the pathogenesis of leptospirosis.</title>
        <authorList>
            <person name="Picardeau M."/>
            <person name="Bulach D.M."/>
            <person name="Bouchier C."/>
            <person name="Zuerner R.L."/>
            <person name="Zidane N."/>
            <person name="Wilson P.J."/>
            <person name="Creno S."/>
            <person name="Kuczek E.S."/>
            <person name="Bommezzadri S."/>
            <person name="Davis J.C."/>
            <person name="McGrath A."/>
            <person name="Johnson M.J."/>
            <person name="Boursaux-Eude C."/>
            <person name="Seemann T."/>
            <person name="Rouy Z."/>
            <person name="Coppel R.L."/>
            <person name="Rood J.I."/>
            <person name="Lajus A."/>
            <person name="Davies J.K."/>
            <person name="Medigue C."/>
            <person name="Adler B."/>
        </authorList>
    </citation>
    <scope>NUCLEOTIDE SEQUENCE [LARGE SCALE GENOMIC DNA]</scope>
    <source>
        <strain>Patoc 1 / Ames</strain>
    </source>
</reference>